<reference key="1">
    <citation type="journal article" date="2007" name="Proc. Natl. Acad. Sci. U.S.A.">
        <title>Using plastid genome-scale data to resolve enigmatic relationships among basal angiosperms.</title>
        <authorList>
            <person name="Moore M.J."/>
            <person name="Bell C.D."/>
            <person name="Soltis P.S."/>
            <person name="Soltis D.E."/>
        </authorList>
    </citation>
    <scope>NUCLEOTIDE SEQUENCE [LARGE SCALE GENOMIC DNA]</scope>
</reference>
<gene>
    <name type="primary">ndhF</name>
</gene>
<dbReference type="EC" id="7.1.1.-"/>
<dbReference type="EMBL" id="EF614270">
    <property type="protein sequence ID" value="ABQ81498.1"/>
    <property type="molecule type" value="Genomic_DNA"/>
</dbReference>
<dbReference type="RefSeq" id="YP_001542494.1">
    <property type="nucleotide sequence ID" value="NC_009962.1"/>
</dbReference>
<dbReference type="SMR" id="A8SEF0"/>
<dbReference type="GeneID" id="5729485"/>
<dbReference type="GO" id="GO:0009535">
    <property type="term" value="C:chloroplast thylakoid membrane"/>
    <property type="evidence" value="ECO:0007669"/>
    <property type="project" value="UniProtKB-SubCell"/>
</dbReference>
<dbReference type="GO" id="GO:0008137">
    <property type="term" value="F:NADH dehydrogenase (ubiquinone) activity"/>
    <property type="evidence" value="ECO:0007669"/>
    <property type="project" value="InterPro"/>
</dbReference>
<dbReference type="GO" id="GO:0048038">
    <property type="term" value="F:quinone binding"/>
    <property type="evidence" value="ECO:0007669"/>
    <property type="project" value="UniProtKB-KW"/>
</dbReference>
<dbReference type="GO" id="GO:0042773">
    <property type="term" value="P:ATP synthesis coupled electron transport"/>
    <property type="evidence" value="ECO:0007669"/>
    <property type="project" value="InterPro"/>
</dbReference>
<dbReference type="GO" id="GO:0015990">
    <property type="term" value="P:electron transport coupled proton transport"/>
    <property type="evidence" value="ECO:0007669"/>
    <property type="project" value="TreeGrafter"/>
</dbReference>
<dbReference type="Gene3D" id="1.20.5.2700">
    <property type="match status" value="1"/>
</dbReference>
<dbReference type="InterPro" id="IPR002128">
    <property type="entry name" value="NADH_UbQ_OxRdtase_chlpt_su5_C"/>
</dbReference>
<dbReference type="InterPro" id="IPR018393">
    <property type="entry name" value="NADHpl_OxRdtase_5_subgr"/>
</dbReference>
<dbReference type="InterPro" id="IPR001750">
    <property type="entry name" value="ND/Mrp_TM"/>
</dbReference>
<dbReference type="InterPro" id="IPR003945">
    <property type="entry name" value="NU5C-like"/>
</dbReference>
<dbReference type="InterPro" id="IPR001516">
    <property type="entry name" value="Proton_antipo_N"/>
</dbReference>
<dbReference type="NCBIfam" id="TIGR01974">
    <property type="entry name" value="NDH_I_L"/>
    <property type="match status" value="1"/>
</dbReference>
<dbReference type="NCBIfam" id="NF005141">
    <property type="entry name" value="PRK06590.1"/>
    <property type="match status" value="1"/>
</dbReference>
<dbReference type="PANTHER" id="PTHR42829">
    <property type="entry name" value="NADH-UBIQUINONE OXIDOREDUCTASE CHAIN 5"/>
    <property type="match status" value="1"/>
</dbReference>
<dbReference type="PANTHER" id="PTHR42829:SF2">
    <property type="entry name" value="NADH-UBIQUINONE OXIDOREDUCTASE CHAIN 5"/>
    <property type="match status" value="1"/>
</dbReference>
<dbReference type="Pfam" id="PF01010">
    <property type="entry name" value="Proton_antipo_C"/>
    <property type="match status" value="1"/>
</dbReference>
<dbReference type="Pfam" id="PF00361">
    <property type="entry name" value="Proton_antipo_M"/>
    <property type="match status" value="1"/>
</dbReference>
<dbReference type="Pfam" id="PF00662">
    <property type="entry name" value="Proton_antipo_N"/>
    <property type="match status" value="1"/>
</dbReference>
<dbReference type="PRINTS" id="PR01434">
    <property type="entry name" value="NADHDHGNASE5"/>
</dbReference>
<dbReference type="PRINTS" id="PR01435">
    <property type="entry name" value="NPOXDRDTASE5"/>
</dbReference>
<keyword id="KW-0150">Chloroplast</keyword>
<keyword id="KW-0472">Membrane</keyword>
<keyword id="KW-0520">NAD</keyword>
<keyword id="KW-0521">NADP</keyword>
<keyword id="KW-0934">Plastid</keyword>
<keyword id="KW-0618">Plastoquinone</keyword>
<keyword id="KW-0874">Quinone</keyword>
<keyword id="KW-0793">Thylakoid</keyword>
<keyword id="KW-1278">Translocase</keyword>
<keyword id="KW-0812">Transmembrane</keyword>
<keyword id="KW-1133">Transmembrane helix</keyword>
<keyword id="KW-0813">Transport</keyword>
<protein>
    <recommendedName>
        <fullName>NAD(P)H-quinone oxidoreductase subunit 5, chloroplastic</fullName>
        <ecNumber>7.1.1.-</ecNumber>
    </recommendedName>
    <alternativeName>
        <fullName>NAD(P)H dehydrogenase subunit 5</fullName>
    </alternativeName>
    <alternativeName>
        <fullName>NADH-plastoquinone oxidoreductase subunit 5</fullName>
    </alternativeName>
</protein>
<comment type="function">
    <text evidence="1">NDH shuttles electrons from NAD(P)H:plastoquinone, via FMN and iron-sulfur (Fe-S) centers, to quinones in the photosynthetic chain and possibly in a chloroplast respiratory chain. The immediate electron acceptor for the enzyme in this species is believed to be plastoquinone. Couples the redox reaction to proton translocation, and thus conserves the redox energy in a proton gradient (By similarity).</text>
</comment>
<comment type="catalytic activity">
    <reaction>
        <text>a plastoquinone + NADH + (n+1) H(+)(in) = a plastoquinol + NAD(+) + n H(+)(out)</text>
        <dbReference type="Rhea" id="RHEA:42608"/>
        <dbReference type="Rhea" id="RHEA-COMP:9561"/>
        <dbReference type="Rhea" id="RHEA-COMP:9562"/>
        <dbReference type="ChEBI" id="CHEBI:15378"/>
        <dbReference type="ChEBI" id="CHEBI:17757"/>
        <dbReference type="ChEBI" id="CHEBI:57540"/>
        <dbReference type="ChEBI" id="CHEBI:57945"/>
        <dbReference type="ChEBI" id="CHEBI:62192"/>
    </reaction>
</comment>
<comment type="catalytic activity">
    <reaction>
        <text>a plastoquinone + NADPH + (n+1) H(+)(in) = a plastoquinol + NADP(+) + n H(+)(out)</text>
        <dbReference type="Rhea" id="RHEA:42612"/>
        <dbReference type="Rhea" id="RHEA-COMP:9561"/>
        <dbReference type="Rhea" id="RHEA-COMP:9562"/>
        <dbReference type="ChEBI" id="CHEBI:15378"/>
        <dbReference type="ChEBI" id="CHEBI:17757"/>
        <dbReference type="ChEBI" id="CHEBI:57783"/>
        <dbReference type="ChEBI" id="CHEBI:58349"/>
        <dbReference type="ChEBI" id="CHEBI:62192"/>
    </reaction>
</comment>
<comment type="subunit">
    <text evidence="1">NDH is composed of at least 16 different subunits, 5 of which are encoded in the nucleus.</text>
</comment>
<comment type="subcellular location">
    <subcellularLocation>
        <location evidence="1">Plastid</location>
        <location evidence="1">Chloroplast thylakoid membrane</location>
        <topology evidence="1">Multi-pass membrane protein</topology>
    </subcellularLocation>
</comment>
<comment type="similarity">
    <text evidence="3">Belongs to the complex I subunit 5 family.</text>
</comment>
<name>NU5C_CERDE</name>
<organism>
    <name type="scientific">Ceratophyllum demersum</name>
    <name type="common">Rigid hornwort</name>
    <name type="synonym">Coontail</name>
    <dbReference type="NCBI Taxonomy" id="4428"/>
    <lineage>
        <taxon>Eukaryota</taxon>
        <taxon>Viridiplantae</taxon>
        <taxon>Streptophyta</taxon>
        <taxon>Embryophyta</taxon>
        <taxon>Tracheophyta</taxon>
        <taxon>Spermatophyta</taxon>
        <taxon>Magnoliopsida</taxon>
        <taxon>Ceratophyllales</taxon>
        <taxon>Ceratophyllaceae</taxon>
        <taxon>Ceratophyllum</taxon>
    </lineage>
</organism>
<geneLocation type="chloroplast"/>
<proteinExistence type="inferred from homology"/>
<evidence type="ECO:0000250" key="1"/>
<evidence type="ECO:0000255" key="2"/>
<evidence type="ECO:0000305" key="3"/>
<feature type="chain" id="PRO_0000360918" description="NAD(P)H-quinone oxidoreductase subunit 5, chloroplastic">
    <location>
        <begin position="1"/>
        <end position="741"/>
    </location>
</feature>
<feature type="transmembrane region" description="Helical" evidence="2">
    <location>
        <begin position="9"/>
        <end position="29"/>
    </location>
</feature>
<feature type="transmembrane region" description="Helical" evidence="2">
    <location>
        <begin position="40"/>
        <end position="60"/>
    </location>
</feature>
<feature type="transmembrane region" description="Helical" evidence="2">
    <location>
        <begin position="89"/>
        <end position="109"/>
    </location>
</feature>
<feature type="transmembrane region" description="Helical" evidence="2">
    <location>
        <begin position="125"/>
        <end position="145"/>
    </location>
</feature>
<feature type="transmembrane region" description="Helical" evidence="2">
    <location>
        <begin position="147"/>
        <end position="167"/>
    </location>
</feature>
<feature type="transmembrane region" description="Helical" evidence="2">
    <location>
        <begin position="185"/>
        <end position="205"/>
    </location>
</feature>
<feature type="transmembrane region" description="Helical" evidence="2">
    <location>
        <begin position="219"/>
        <end position="239"/>
    </location>
</feature>
<feature type="transmembrane region" description="Helical" evidence="2">
    <location>
        <begin position="258"/>
        <end position="278"/>
    </location>
</feature>
<feature type="transmembrane region" description="Helical" evidence="2">
    <location>
        <begin position="280"/>
        <end position="300"/>
    </location>
</feature>
<feature type="transmembrane region" description="Helical" evidence="2">
    <location>
        <begin position="327"/>
        <end position="347"/>
    </location>
</feature>
<feature type="transmembrane region" description="Helical" evidence="2">
    <location>
        <begin position="396"/>
        <end position="416"/>
    </location>
</feature>
<feature type="transmembrane region" description="Helical" evidence="2">
    <location>
        <begin position="425"/>
        <end position="445"/>
    </location>
</feature>
<feature type="transmembrane region" description="Helical" evidence="2">
    <location>
        <begin position="547"/>
        <end position="567"/>
    </location>
</feature>
<feature type="transmembrane region" description="Helical" evidence="2">
    <location>
        <begin position="606"/>
        <end position="626"/>
    </location>
</feature>
<feature type="transmembrane region" description="Helical" evidence="2">
    <location>
        <begin position="721"/>
        <end position="741"/>
    </location>
</feature>
<sequence length="741" mass="83540">MEHTYQYAWIIPLLPLTVTMLIGLGLLLFPIATKNLRRMWAVPSVLFLSIGMLLSVELAIQQINQSSVYKYLWSWTINNDFSLEFGYLIDPLTSIMSILITTVGILVLIYSDNYMSHDQGYLRFFSYLSFFNASMLGLVTSSNLIQIYIFWELVGMCSYLLIGFWFARPIAANACQKAFVTNRVGDFGLLLGILGLYWITGSFEFRDLFELCNNLIPNNGVNSLFATLCAFLLFLGAVAKSAQFPLHVWLPDAMEGPTPISALIHAATMVAAGIFLVARLLPLFIVIPYIMNLISLIGVITLLLGATLALSQRDIKRSLAYSTMSQLGYIMLAPGIGSYRTALFHLITHAYSKALLFLGSGSIIHSMEPIVGYSPEKSQNMALMGGLTKYVPITKTTFFWGTLSLCGIPPLACFWSKDEILHDSWLYSPIFAIIAYATAGLTAFYMFRMYLLTFDGYLRIHFKKYSGNKKGSFYSISIWGQKELKPVNSNFLLSTVNNNEKVSFFSTKTSQIDGNVRPLMHSLSIHFSNLSKKDIFTYPHESDNTMLLPLLLLGLFTWFVGLIGIPFNQEEEGFDILSKWLIPPINLLHQNSSSPVDWYEFITNSILSVSISVFGIFTASLLYGSVYSSFKNMELINSVVKISPKRSLLDRIINVIYNWSCNRGYIDVFYARSLTMMIRGLAQLTHFFDRRVIDGITNGFGIVSFFVGEGIKYAGGGRISSYIFYYSSYVLIFVLIFYFFI</sequence>
<accession>A8SEF0</accession>